<accession>Q83LX4</accession>
<accession>Q7C2L8</accession>
<keyword id="KW-0002">3D-structure</keyword>
<keyword id="KW-0998">Cell outer membrane</keyword>
<keyword id="KW-0449">Lipoprotein</keyword>
<keyword id="KW-0472">Membrane</keyword>
<keyword id="KW-0564">Palmitate</keyword>
<keyword id="KW-1185">Reference proteome</keyword>
<keyword id="KW-0732">Signal</keyword>
<proteinExistence type="evidence at protein level"/>
<sequence length="193" mass="21387">MRYLATLLLSLAVLITAGCGWHLRDTTQVPSTMKVMILDSGDPNGPLSRAVRNQLRLNGVELLDKETTRKDVPSLRLGKVSIAKDTASVFRNGQTAEYQMIMTVNATVLIPGRDIYPISAKVFRSFFDNPQMALAKDNEQDMIVKEMYDRAAEQLIRKLPSIRAADIRSDEEQTSTTTDTPATPARVSTMLGN</sequence>
<protein>
    <recommendedName>
        <fullName evidence="1">LPS-assembly lipoprotein LptE</fullName>
    </recommendedName>
</protein>
<gene>
    <name evidence="1" type="primary">lptE</name>
    <name type="synonym">rlpB</name>
    <name type="ordered locus">SF0640</name>
    <name type="ordered locus">S0662</name>
</gene>
<comment type="function">
    <text evidence="1">Together with LptD, is involved in the assembly of lipopolysaccharide (LPS) at the surface of the outer membrane. Required for the proper assembly of LptD. Binds LPS and may serve as the LPS recognition site at the outer membrane.</text>
</comment>
<comment type="subunit">
    <text evidence="1">Component of the lipopolysaccharide transport and assembly complex. Interacts with LptD.</text>
</comment>
<comment type="interaction">
    <interactant intactId="EBI-16111649">
        <id>Q83LX4</id>
    </interactant>
    <interactant intactId="EBI-16111665">
        <id>Q83SQ0</id>
        <label>lptD</label>
    </interactant>
    <organismsDiffer>false</organismsDiffer>
    <experiments>4</experiments>
</comment>
<comment type="subcellular location">
    <subcellularLocation>
        <location evidence="1">Cell outer membrane</location>
        <topology evidence="1">Lipid-anchor</topology>
    </subcellularLocation>
</comment>
<comment type="similarity">
    <text evidence="1">Belongs to the LptE lipoprotein family.</text>
</comment>
<name>LPTE_SHIFL</name>
<feature type="signal peptide" evidence="1">
    <location>
        <begin position="1"/>
        <end position="18"/>
    </location>
</feature>
<feature type="chain" id="PRO_0000281187" description="LPS-assembly lipoprotein LptE">
    <location>
        <begin position="19"/>
        <end position="193"/>
    </location>
</feature>
<feature type="region of interest" description="Disordered" evidence="2">
    <location>
        <begin position="166"/>
        <end position="193"/>
    </location>
</feature>
<feature type="compositionally biased region" description="Low complexity" evidence="2">
    <location>
        <begin position="174"/>
        <end position="186"/>
    </location>
</feature>
<feature type="lipid moiety-binding region" description="N-palmitoyl cysteine" evidence="1">
    <location>
        <position position="19"/>
    </location>
</feature>
<feature type="lipid moiety-binding region" description="S-diacylglycerol cysteine" evidence="1">
    <location>
        <position position="19"/>
    </location>
</feature>
<feature type="helix" evidence="3">
    <location>
        <begin position="31"/>
        <end position="33"/>
    </location>
</feature>
<feature type="strand" evidence="3">
    <location>
        <begin position="34"/>
        <end position="41"/>
    </location>
</feature>
<feature type="helix" evidence="3">
    <location>
        <begin position="46"/>
        <end position="57"/>
    </location>
</feature>
<feature type="strand" evidence="3">
    <location>
        <begin position="61"/>
        <end position="63"/>
    </location>
</feature>
<feature type="strand" evidence="3">
    <location>
        <begin position="74"/>
        <end position="77"/>
    </location>
</feature>
<feature type="strand" evidence="3">
    <location>
        <begin position="81"/>
        <end position="89"/>
    </location>
</feature>
<feature type="strand" evidence="3">
    <location>
        <begin position="95"/>
        <end position="109"/>
    </location>
</feature>
<feature type="strand" evidence="3">
    <location>
        <begin position="111"/>
        <end position="113"/>
    </location>
</feature>
<feature type="strand" evidence="3">
    <location>
        <begin position="115"/>
        <end position="127"/>
    </location>
</feature>
<feature type="helix" evidence="3">
    <location>
        <begin position="130"/>
        <end position="132"/>
    </location>
</feature>
<feature type="helix" evidence="3">
    <location>
        <begin position="133"/>
        <end position="157"/>
    </location>
</feature>
<feature type="helix" evidence="3">
    <location>
        <begin position="159"/>
        <end position="168"/>
    </location>
</feature>
<organism>
    <name type="scientific">Shigella flexneri</name>
    <dbReference type="NCBI Taxonomy" id="623"/>
    <lineage>
        <taxon>Bacteria</taxon>
        <taxon>Pseudomonadati</taxon>
        <taxon>Pseudomonadota</taxon>
        <taxon>Gammaproteobacteria</taxon>
        <taxon>Enterobacterales</taxon>
        <taxon>Enterobacteriaceae</taxon>
        <taxon>Shigella</taxon>
    </lineage>
</organism>
<evidence type="ECO:0000255" key="1">
    <source>
        <dbReference type="HAMAP-Rule" id="MF_01186"/>
    </source>
</evidence>
<evidence type="ECO:0000256" key="2">
    <source>
        <dbReference type="SAM" id="MobiDB-lite"/>
    </source>
</evidence>
<evidence type="ECO:0007829" key="3">
    <source>
        <dbReference type="PDB" id="4Q35"/>
    </source>
</evidence>
<reference key="1">
    <citation type="journal article" date="2002" name="Nucleic Acids Res.">
        <title>Genome sequence of Shigella flexneri 2a: insights into pathogenicity through comparison with genomes of Escherichia coli K12 and O157.</title>
        <authorList>
            <person name="Jin Q."/>
            <person name="Yuan Z."/>
            <person name="Xu J."/>
            <person name="Wang Y."/>
            <person name="Shen Y."/>
            <person name="Lu W."/>
            <person name="Wang J."/>
            <person name="Liu H."/>
            <person name="Yang J."/>
            <person name="Yang F."/>
            <person name="Zhang X."/>
            <person name="Zhang J."/>
            <person name="Yang G."/>
            <person name="Wu H."/>
            <person name="Qu D."/>
            <person name="Dong J."/>
            <person name="Sun L."/>
            <person name="Xue Y."/>
            <person name="Zhao A."/>
            <person name="Gao Y."/>
            <person name="Zhu J."/>
            <person name="Kan B."/>
            <person name="Ding K."/>
            <person name="Chen S."/>
            <person name="Cheng H."/>
            <person name="Yao Z."/>
            <person name="He B."/>
            <person name="Chen R."/>
            <person name="Ma D."/>
            <person name="Qiang B."/>
            <person name="Wen Y."/>
            <person name="Hou Y."/>
            <person name="Yu J."/>
        </authorList>
    </citation>
    <scope>NUCLEOTIDE SEQUENCE [LARGE SCALE GENOMIC DNA]</scope>
    <source>
        <strain>301 / Serotype 2a</strain>
    </source>
</reference>
<reference key="2">
    <citation type="journal article" date="2003" name="Infect. Immun.">
        <title>Complete genome sequence and comparative genomics of Shigella flexneri serotype 2a strain 2457T.</title>
        <authorList>
            <person name="Wei J."/>
            <person name="Goldberg M.B."/>
            <person name="Burland V."/>
            <person name="Venkatesan M.M."/>
            <person name="Deng W."/>
            <person name="Fournier G."/>
            <person name="Mayhew G.F."/>
            <person name="Plunkett G. III"/>
            <person name="Rose D.J."/>
            <person name="Darling A."/>
            <person name="Mau B."/>
            <person name="Perna N.T."/>
            <person name="Payne S.M."/>
            <person name="Runyen-Janecky L.J."/>
            <person name="Zhou S."/>
            <person name="Schwartz D.C."/>
            <person name="Blattner F.R."/>
        </authorList>
    </citation>
    <scope>NUCLEOTIDE SEQUENCE [LARGE SCALE GENOMIC DNA]</scope>
    <source>
        <strain>ATCC 700930 / 2457T / Serotype 2a</strain>
    </source>
</reference>
<dbReference type="EMBL" id="AE005674">
    <property type="protein sequence ID" value="AAN42276.1"/>
    <property type="molecule type" value="Genomic_DNA"/>
</dbReference>
<dbReference type="EMBL" id="AE014073">
    <property type="protein sequence ID" value="AAP16147.1"/>
    <property type="molecule type" value="Genomic_DNA"/>
</dbReference>
<dbReference type="RefSeq" id="NP_706569.1">
    <property type="nucleotide sequence ID" value="NC_004337.2"/>
</dbReference>
<dbReference type="RefSeq" id="WP_001269672.1">
    <property type="nucleotide sequence ID" value="NZ_WPGW01000002.1"/>
</dbReference>
<dbReference type="PDB" id="4Q35">
    <property type="method" value="X-ray"/>
    <property type="resolution" value="2.39 A"/>
    <property type="chains" value="B=19-193"/>
</dbReference>
<dbReference type="PDBsum" id="4Q35"/>
<dbReference type="SMR" id="Q83LX4"/>
<dbReference type="DIP" id="DIP-61035N"/>
<dbReference type="IntAct" id="Q83LX4">
    <property type="interactions" value="1"/>
</dbReference>
<dbReference type="STRING" id="198214.SF0640"/>
<dbReference type="PaxDb" id="198214-SF0640"/>
<dbReference type="DNASU" id="1077092"/>
<dbReference type="GeneID" id="1023631"/>
<dbReference type="KEGG" id="sfl:SF0640"/>
<dbReference type="KEGG" id="sfx:S0662"/>
<dbReference type="PATRIC" id="fig|198214.7.peg.747"/>
<dbReference type="HOGENOM" id="CLU_103309_1_1_6"/>
<dbReference type="EvolutionaryTrace" id="Q83LX4"/>
<dbReference type="Proteomes" id="UP000001006">
    <property type="component" value="Chromosome"/>
</dbReference>
<dbReference type="Proteomes" id="UP000002673">
    <property type="component" value="Chromosome"/>
</dbReference>
<dbReference type="GO" id="GO:0009279">
    <property type="term" value="C:cell outer membrane"/>
    <property type="evidence" value="ECO:0007669"/>
    <property type="project" value="UniProtKB-SubCell"/>
</dbReference>
<dbReference type="GO" id="GO:1990351">
    <property type="term" value="C:transporter complex"/>
    <property type="evidence" value="ECO:0007669"/>
    <property type="project" value="TreeGrafter"/>
</dbReference>
<dbReference type="GO" id="GO:0001530">
    <property type="term" value="F:lipopolysaccharide binding"/>
    <property type="evidence" value="ECO:0007669"/>
    <property type="project" value="TreeGrafter"/>
</dbReference>
<dbReference type="GO" id="GO:0043165">
    <property type="term" value="P:Gram-negative-bacterium-type cell outer membrane assembly"/>
    <property type="evidence" value="ECO:0007669"/>
    <property type="project" value="UniProtKB-UniRule"/>
</dbReference>
<dbReference type="GO" id="GO:0015920">
    <property type="term" value="P:lipopolysaccharide transport"/>
    <property type="evidence" value="ECO:0007669"/>
    <property type="project" value="TreeGrafter"/>
</dbReference>
<dbReference type="FunFam" id="3.30.160.150:FF:000001">
    <property type="entry name" value="LPS-assembly lipoprotein LptE"/>
    <property type="match status" value="1"/>
</dbReference>
<dbReference type="Gene3D" id="3.30.160.150">
    <property type="entry name" value="Lipoprotein like domain"/>
    <property type="match status" value="1"/>
</dbReference>
<dbReference type="HAMAP" id="MF_01186">
    <property type="entry name" value="LPS_assembly_LptE"/>
    <property type="match status" value="1"/>
</dbReference>
<dbReference type="InterPro" id="IPR007485">
    <property type="entry name" value="LPS_assembly_LptE"/>
</dbReference>
<dbReference type="NCBIfam" id="NF008062">
    <property type="entry name" value="PRK10796.1"/>
    <property type="match status" value="1"/>
</dbReference>
<dbReference type="PANTHER" id="PTHR38098">
    <property type="entry name" value="LPS-ASSEMBLY LIPOPROTEIN LPTE"/>
    <property type="match status" value="1"/>
</dbReference>
<dbReference type="PANTHER" id="PTHR38098:SF1">
    <property type="entry name" value="LPS-ASSEMBLY LIPOPROTEIN LPTE"/>
    <property type="match status" value="1"/>
</dbReference>
<dbReference type="Pfam" id="PF04390">
    <property type="entry name" value="LptE"/>
    <property type="match status" value="1"/>
</dbReference>
<dbReference type="PROSITE" id="PS51257">
    <property type="entry name" value="PROKAR_LIPOPROTEIN"/>
    <property type="match status" value="1"/>
</dbReference>